<sequence>MVKIAIDMMGGDDAPGIVLEAVEKAVNDFKDLEIILFGDQNQYTLNHERIEFRHCSEKIEMEDEPVRAIKRKKDSSMVRMAEAVKNGEADGCVSAGNTGALMSAGLFIVGRIKGVARPALVVTLPTIDGKGFVFLDVGANADAKPEHLLQYAQLGNIYAKKIRGIQNPKVSLLNIGTEPAKGNTLTKKSYQLLKDDQSFNFDGNIEAKTLMEGNTDVVVTDGYTGNMVLKNIEGTAKSIGKMLKETFLGSLKNKLAALVLKKDLDTFTKKMDYAEYGGSVLLGLDGTVVKAHGGSNARAFYSAIRQAKIAGDEKIVDIMRETVGGKDE</sequence>
<name>PLSX_STAHJ</name>
<organism>
    <name type="scientific">Staphylococcus haemolyticus (strain JCSC1435)</name>
    <dbReference type="NCBI Taxonomy" id="279808"/>
    <lineage>
        <taxon>Bacteria</taxon>
        <taxon>Bacillati</taxon>
        <taxon>Bacillota</taxon>
        <taxon>Bacilli</taxon>
        <taxon>Bacillales</taxon>
        <taxon>Staphylococcaceae</taxon>
        <taxon>Staphylococcus</taxon>
    </lineage>
</organism>
<protein>
    <recommendedName>
        <fullName evidence="1">Phosphate acyltransferase</fullName>
        <ecNumber evidence="1">2.3.1.274</ecNumber>
    </recommendedName>
    <alternativeName>
        <fullName evidence="1">Acyl-ACP phosphotransacylase</fullName>
    </alternativeName>
    <alternativeName>
        <fullName evidence="1">Acyl-[acyl-carrier-protein]--phosphate acyltransferase</fullName>
    </alternativeName>
    <alternativeName>
        <fullName evidence="1">Phosphate-acyl-ACP acyltransferase</fullName>
    </alternativeName>
</protein>
<reference key="1">
    <citation type="journal article" date="2005" name="J. Bacteriol.">
        <title>Whole-genome sequencing of Staphylococcus haemolyticus uncovers the extreme plasticity of its genome and the evolution of human-colonizing staphylococcal species.</title>
        <authorList>
            <person name="Takeuchi F."/>
            <person name="Watanabe S."/>
            <person name="Baba T."/>
            <person name="Yuzawa H."/>
            <person name="Ito T."/>
            <person name="Morimoto Y."/>
            <person name="Kuroda M."/>
            <person name="Cui L."/>
            <person name="Takahashi M."/>
            <person name="Ankai A."/>
            <person name="Baba S."/>
            <person name="Fukui S."/>
            <person name="Lee J.C."/>
            <person name="Hiramatsu K."/>
        </authorList>
    </citation>
    <scope>NUCLEOTIDE SEQUENCE [LARGE SCALE GENOMIC DNA]</scope>
    <source>
        <strain>JCSC1435</strain>
    </source>
</reference>
<keyword id="KW-0963">Cytoplasm</keyword>
<keyword id="KW-0444">Lipid biosynthesis</keyword>
<keyword id="KW-0443">Lipid metabolism</keyword>
<keyword id="KW-0594">Phospholipid biosynthesis</keyword>
<keyword id="KW-1208">Phospholipid metabolism</keyword>
<keyword id="KW-0808">Transferase</keyword>
<feature type="chain" id="PRO_1000001840" description="Phosphate acyltransferase">
    <location>
        <begin position="1"/>
        <end position="328"/>
    </location>
</feature>
<dbReference type="EC" id="2.3.1.274" evidence="1"/>
<dbReference type="EMBL" id="AP006716">
    <property type="protein sequence ID" value="BAE04994.1"/>
    <property type="molecule type" value="Genomic_DNA"/>
</dbReference>
<dbReference type="RefSeq" id="WP_011275970.1">
    <property type="nucleotide sequence ID" value="NC_007168.1"/>
</dbReference>
<dbReference type="SMR" id="Q4L5T1"/>
<dbReference type="GeneID" id="93781063"/>
<dbReference type="KEGG" id="sha:SH1685"/>
<dbReference type="eggNOG" id="COG0416">
    <property type="taxonomic scope" value="Bacteria"/>
</dbReference>
<dbReference type="HOGENOM" id="CLU_039379_1_1_9"/>
<dbReference type="OrthoDB" id="9806408at2"/>
<dbReference type="UniPathway" id="UPA00085"/>
<dbReference type="Proteomes" id="UP000000543">
    <property type="component" value="Chromosome"/>
</dbReference>
<dbReference type="GO" id="GO:0005737">
    <property type="term" value="C:cytoplasm"/>
    <property type="evidence" value="ECO:0007669"/>
    <property type="project" value="UniProtKB-SubCell"/>
</dbReference>
<dbReference type="GO" id="GO:0043811">
    <property type="term" value="F:phosphate:acyl-[acyl carrier protein] acyltransferase activity"/>
    <property type="evidence" value="ECO:0007669"/>
    <property type="project" value="UniProtKB-UniRule"/>
</dbReference>
<dbReference type="GO" id="GO:0006633">
    <property type="term" value="P:fatty acid biosynthetic process"/>
    <property type="evidence" value="ECO:0007669"/>
    <property type="project" value="UniProtKB-UniRule"/>
</dbReference>
<dbReference type="GO" id="GO:0008654">
    <property type="term" value="P:phospholipid biosynthetic process"/>
    <property type="evidence" value="ECO:0007669"/>
    <property type="project" value="UniProtKB-KW"/>
</dbReference>
<dbReference type="Gene3D" id="3.40.718.10">
    <property type="entry name" value="Isopropylmalate Dehydrogenase"/>
    <property type="match status" value="1"/>
</dbReference>
<dbReference type="HAMAP" id="MF_00019">
    <property type="entry name" value="PlsX"/>
    <property type="match status" value="1"/>
</dbReference>
<dbReference type="InterPro" id="IPR003664">
    <property type="entry name" value="FA_synthesis"/>
</dbReference>
<dbReference type="InterPro" id="IPR012281">
    <property type="entry name" value="Phospholipid_synth_PlsX-like"/>
</dbReference>
<dbReference type="NCBIfam" id="TIGR00182">
    <property type="entry name" value="plsX"/>
    <property type="match status" value="1"/>
</dbReference>
<dbReference type="PANTHER" id="PTHR30100">
    <property type="entry name" value="FATTY ACID/PHOSPHOLIPID SYNTHESIS PROTEIN PLSX"/>
    <property type="match status" value="1"/>
</dbReference>
<dbReference type="PANTHER" id="PTHR30100:SF1">
    <property type="entry name" value="PHOSPHATE ACYLTRANSFERASE"/>
    <property type="match status" value="1"/>
</dbReference>
<dbReference type="Pfam" id="PF02504">
    <property type="entry name" value="FA_synthesis"/>
    <property type="match status" value="1"/>
</dbReference>
<dbReference type="PIRSF" id="PIRSF002465">
    <property type="entry name" value="Phsphlp_syn_PlsX"/>
    <property type="match status" value="1"/>
</dbReference>
<dbReference type="SUPFAM" id="SSF53659">
    <property type="entry name" value="Isocitrate/Isopropylmalate dehydrogenase-like"/>
    <property type="match status" value="1"/>
</dbReference>
<proteinExistence type="inferred from homology"/>
<accession>Q4L5T1</accession>
<gene>
    <name evidence="1" type="primary">plsX</name>
    <name type="ordered locus">SH1685</name>
</gene>
<evidence type="ECO:0000255" key="1">
    <source>
        <dbReference type="HAMAP-Rule" id="MF_00019"/>
    </source>
</evidence>
<comment type="function">
    <text evidence="1">Catalyzes the reversible formation of acyl-phosphate (acyl-PO(4)) from acyl-[acyl-carrier-protein] (acyl-ACP). This enzyme utilizes acyl-ACP as fatty acyl donor, but not acyl-CoA.</text>
</comment>
<comment type="catalytic activity">
    <reaction evidence="1">
        <text>a fatty acyl-[ACP] + phosphate = an acyl phosphate + holo-[ACP]</text>
        <dbReference type="Rhea" id="RHEA:42292"/>
        <dbReference type="Rhea" id="RHEA-COMP:9685"/>
        <dbReference type="Rhea" id="RHEA-COMP:14125"/>
        <dbReference type="ChEBI" id="CHEBI:43474"/>
        <dbReference type="ChEBI" id="CHEBI:59918"/>
        <dbReference type="ChEBI" id="CHEBI:64479"/>
        <dbReference type="ChEBI" id="CHEBI:138651"/>
        <dbReference type="EC" id="2.3.1.274"/>
    </reaction>
</comment>
<comment type="pathway">
    <text evidence="1">Lipid metabolism; phospholipid metabolism.</text>
</comment>
<comment type="subunit">
    <text evidence="1">Homodimer. Probably interacts with PlsY.</text>
</comment>
<comment type="subcellular location">
    <subcellularLocation>
        <location evidence="1">Cytoplasm</location>
    </subcellularLocation>
    <text evidence="1">Associated with the membrane possibly through PlsY.</text>
</comment>
<comment type="similarity">
    <text evidence="1">Belongs to the PlsX family.</text>
</comment>